<comment type="function">
    <text evidence="2">Catalyzes the oxidative phosphorylation of glyceraldehyde 3-phosphate (G3P) to 1,3-bisphosphoglycerate (BPG) using the cofactor NAD. The first reaction step involves the formation of a hemiacetal intermediate between G3P and a cysteine residue, and this hemiacetal intermediate is then oxidized to a thioester, with concomitant reduction of NAD to NADH. The reduced NADH is then exchanged with the second NAD, and the thioester is attacked by a nucleophilic inorganic phosphate to produce BPG.</text>
</comment>
<comment type="catalytic activity">
    <reaction evidence="3">
        <text>D-glyceraldehyde 3-phosphate + phosphate + NAD(+) = (2R)-3-phospho-glyceroyl phosphate + NADH + H(+)</text>
        <dbReference type="Rhea" id="RHEA:10300"/>
        <dbReference type="ChEBI" id="CHEBI:15378"/>
        <dbReference type="ChEBI" id="CHEBI:43474"/>
        <dbReference type="ChEBI" id="CHEBI:57540"/>
        <dbReference type="ChEBI" id="CHEBI:57604"/>
        <dbReference type="ChEBI" id="CHEBI:57945"/>
        <dbReference type="ChEBI" id="CHEBI:59776"/>
        <dbReference type="EC" id="1.2.1.12"/>
    </reaction>
</comment>
<comment type="pathway">
    <text evidence="6">Carbohydrate degradation; glycolysis; pyruvate from D-glyceraldehyde 3-phosphate: step 1/5.</text>
</comment>
<comment type="subunit">
    <text evidence="2">Homotetramer.</text>
</comment>
<comment type="subcellular location">
    <subcellularLocation>
        <location evidence="6">Cytoplasm</location>
    </subcellularLocation>
</comment>
<comment type="miscellaneous">
    <text evidence="4">Under acid-stress, this protein is expressed at a higher level in wild-type B.cereus than in the acid-sensitive mutant strain NB1.</text>
</comment>
<comment type="similarity">
    <text evidence="6">Belongs to the glyceraldehyde-3-phosphate dehydrogenase family.</text>
</comment>
<sequence length="14" mass="1604">MKQGINGFARRGRL</sequence>
<name>G3P2_BACCE</name>
<reference key="1">
    <citation type="journal article" date="2002" name="J. Appl. Microbiol.">
        <title>Acid stress in the food pathogen Bacillus cereus.</title>
        <authorList>
            <person name="Browne N."/>
            <person name="Dowds B.C.A."/>
        </authorList>
    </citation>
    <scope>PROTEIN SEQUENCE</scope>
    <source>
        <strain>DSM 626 / NCIMB 11796 / T</strain>
    </source>
</reference>
<evidence type="ECO:0000250" key="1">
    <source>
        <dbReference type="UniProtKB" id="P00361"/>
    </source>
</evidence>
<evidence type="ECO:0000250" key="2">
    <source>
        <dbReference type="UniProtKB" id="P00362"/>
    </source>
</evidence>
<evidence type="ECO:0000250" key="3">
    <source>
        <dbReference type="UniProtKB" id="P09124"/>
    </source>
</evidence>
<evidence type="ECO:0000269" key="4">
    <source>
    </source>
</evidence>
<evidence type="ECO:0000303" key="5">
    <source>
    </source>
</evidence>
<evidence type="ECO:0000305" key="6"/>
<proteinExistence type="evidence at protein level"/>
<organism>
    <name type="scientific">Bacillus cereus</name>
    <dbReference type="NCBI Taxonomy" id="1396"/>
    <lineage>
        <taxon>Bacteria</taxon>
        <taxon>Bacillati</taxon>
        <taxon>Bacillota</taxon>
        <taxon>Bacilli</taxon>
        <taxon>Bacillales</taxon>
        <taxon>Bacillaceae</taxon>
        <taxon>Bacillus</taxon>
        <taxon>Bacillus cereus group</taxon>
    </lineage>
</organism>
<dbReference type="EC" id="1.2.1.12" evidence="3"/>
<dbReference type="UniPathway" id="UPA00109">
    <property type="reaction ID" value="UER00184"/>
</dbReference>
<dbReference type="GO" id="GO:0005737">
    <property type="term" value="C:cytoplasm"/>
    <property type="evidence" value="ECO:0007669"/>
    <property type="project" value="UniProtKB-SubCell"/>
</dbReference>
<dbReference type="GO" id="GO:0004365">
    <property type="term" value="F:glyceraldehyde-3-phosphate dehydrogenase (NAD+) (phosphorylating) activity"/>
    <property type="evidence" value="ECO:0000250"/>
    <property type="project" value="UniProtKB"/>
</dbReference>
<dbReference type="GO" id="GO:0051287">
    <property type="term" value="F:NAD binding"/>
    <property type="evidence" value="ECO:0000250"/>
    <property type="project" value="UniProtKB"/>
</dbReference>
<dbReference type="GO" id="GO:0006096">
    <property type="term" value="P:glycolytic process"/>
    <property type="evidence" value="ECO:0007669"/>
    <property type="project" value="UniProtKB-UniPathway"/>
</dbReference>
<feature type="chain" id="PRO_0000271248" description="Glyceraldehyde-3-phosphate dehydrogenase 2">
    <location>
        <begin position="1"/>
        <end position="14" status="greater than"/>
    </location>
</feature>
<feature type="binding site" evidence="1">
    <location>
        <begin position="10"/>
        <end position="11"/>
    </location>
    <ligand>
        <name>NAD(+)</name>
        <dbReference type="ChEBI" id="CHEBI:57540"/>
    </ligand>
</feature>
<feature type="non-terminal residue" evidence="5">
    <location>
        <position position="14"/>
    </location>
</feature>
<keyword id="KW-0963">Cytoplasm</keyword>
<keyword id="KW-0903">Direct protein sequencing</keyword>
<keyword id="KW-0324">Glycolysis</keyword>
<keyword id="KW-0520">NAD</keyword>
<keyword id="KW-0547">Nucleotide-binding</keyword>
<keyword id="KW-0560">Oxidoreductase</keyword>
<accession>P83077</accession>
<protein>
    <recommendedName>
        <fullName evidence="2">Glyceraldehyde-3-phosphate dehydrogenase 2</fullName>
        <shortName evidence="2">GAPDH 2</shortName>
        <ecNumber evidence="3">1.2.1.12</ecNumber>
    </recommendedName>
</protein>
<gene>
    <name type="primary">gap2</name>
</gene>